<reference key="1">
    <citation type="journal article" date="2008" name="ISME J.">
        <title>Comparative genomics of two ecotypes of the marine planktonic copiotroph Alteromonas macleodii suggests alternative lifestyles associated with different kinds of particulate organic matter.</title>
        <authorList>
            <person name="Ivars-Martinez E."/>
            <person name="Martin-Cuadrado A.-B."/>
            <person name="D'Auria G."/>
            <person name="Mira A."/>
            <person name="Ferriera S."/>
            <person name="Johnson J."/>
            <person name="Friedman R."/>
            <person name="Rodriguez-Valera F."/>
        </authorList>
    </citation>
    <scope>NUCLEOTIDE SEQUENCE [LARGE SCALE GENOMIC DNA]</scope>
    <source>
        <strain>DSM 17117 / CIP 110805 / LMG 28347 / Deep ecotype</strain>
    </source>
</reference>
<name>PDXH_ALTMD</name>
<gene>
    <name evidence="1" type="primary">pdxH</name>
    <name evidence="2" type="ordered locus">MADE_1012505</name>
    <name type="ORF">MADE_1005140</name>
</gene>
<dbReference type="EC" id="1.4.3.5" evidence="1"/>
<dbReference type="EMBL" id="CP001103">
    <property type="protein sequence ID" value="AEA98637.2"/>
    <property type="molecule type" value="Genomic_DNA"/>
</dbReference>
<dbReference type="RefSeq" id="WP_012517528.1">
    <property type="nucleotide sequence ID" value="NC_011138.3"/>
</dbReference>
<dbReference type="SMR" id="B4RVA4"/>
<dbReference type="KEGG" id="amc:MADE_1012505"/>
<dbReference type="HOGENOM" id="CLU_032263_2_3_6"/>
<dbReference type="UniPathway" id="UPA01068">
    <property type="reaction ID" value="UER00304"/>
</dbReference>
<dbReference type="UniPathway" id="UPA01068">
    <property type="reaction ID" value="UER00305"/>
</dbReference>
<dbReference type="Proteomes" id="UP000001870">
    <property type="component" value="Chromosome"/>
</dbReference>
<dbReference type="GO" id="GO:0010181">
    <property type="term" value="F:FMN binding"/>
    <property type="evidence" value="ECO:0007669"/>
    <property type="project" value="UniProtKB-UniRule"/>
</dbReference>
<dbReference type="GO" id="GO:0004733">
    <property type="term" value="F:pyridoxamine phosphate oxidase activity"/>
    <property type="evidence" value="ECO:0007669"/>
    <property type="project" value="UniProtKB-UniRule"/>
</dbReference>
<dbReference type="GO" id="GO:0008615">
    <property type="term" value="P:pyridoxine biosynthetic process"/>
    <property type="evidence" value="ECO:0007669"/>
    <property type="project" value="UniProtKB-KW"/>
</dbReference>
<dbReference type="Gene3D" id="2.30.110.10">
    <property type="entry name" value="Electron Transport, Fmn-binding Protein, Chain A"/>
    <property type="match status" value="1"/>
</dbReference>
<dbReference type="HAMAP" id="MF_01629">
    <property type="entry name" value="PdxH"/>
    <property type="match status" value="1"/>
</dbReference>
<dbReference type="InterPro" id="IPR000659">
    <property type="entry name" value="Pyridox_Oxase"/>
</dbReference>
<dbReference type="InterPro" id="IPR019740">
    <property type="entry name" value="Pyridox_Oxase_CS"/>
</dbReference>
<dbReference type="InterPro" id="IPR011576">
    <property type="entry name" value="Pyridox_Oxase_N"/>
</dbReference>
<dbReference type="InterPro" id="IPR019576">
    <property type="entry name" value="Pyridoxamine_oxidase_dimer_C"/>
</dbReference>
<dbReference type="InterPro" id="IPR012349">
    <property type="entry name" value="Split_barrel_FMN-bd"/>
</dbReference>
<dbReference type="NCBIfam" id="TIGR00558">
    <property type="entry name" value="pdxH"/>
    <property type="match status" value="1"/>
</dbReference>
<dbReference type="NCBIfam" id="NF004231">
    <property type="entry name" value="PRK05679.1"/>
    <property type="match status" value="1"/>
</dbReference>
<dbReference type="PANTHER" id="PTHR10851:SF0">
    <property type="entry name" value="PYRIDOXINE-5'-PHOSPHATE OXIDASE"/>
    <property type="match status" value="1"/>
</dbReference>
<dbReference type="PANTHER" id="PTHR10851">
    <property type="entry name" value="PYRIDOXINE-5-PHOSPHATE OXIDASE"/>
    <property type="match status" value="1"/>
</dbReference>
<dbReference type="Pfam" id="PF10590">
    <property type="entry name" value="PNP_phzG_C"/>
    <property type="match status" value="1"/>
</dbReference>
<dbReference type="Pfam" id="PF01243">
    <property type="entry name" value="PNPOx_N"/>
    <property type="match status" value="1"/>
</dbReference>
<dbReference type="PIRSF" id="PIRSF000190">
    <property type="entry name" value="Pyd_amn-ph_oxd"/>
    <property type="match status" value="1"/>
</dbReference>
<dbReference type="SUPFAM" id="SSF50475">
    <property type="entry name" value="FMN-binding split barrel"/>
    <property type="match status" value="1"/>
</dbReference>
<dbReference type="PROSITE" id="PS01064">
    <property type="entry name" value="PYRIDOX_OXIDASE"/>
    <property type="match status" value="1"/>
</dbReference>
<evidence type="ECO:0000255" key="1">
    <source>
        <dbReference type="HAMAP-Rule" id="MF_01629"/>
    </source>
</evidence>
<evidence type="ECO:0000312" key="2">
    <source>
        <dbReference type="EMBL" id="AEA98637.2"/>
    </source>
</evidence>
<proteinExistence type="inferred from homology"/>
<accession>B4RVA4</accession>
<accession>F2G240</accession>
<accession>F2G703</accession>
<comment type="function">
    <text evidence="1">Catalyzes the oxidation of either pyridoxine 5'-phosphate (PNP) or pyridoxamine 5'-phosphate (PMP) into pyridoxal 5'-phosphate (PLP).</text>
</comment>
<comment type="catalytic activity">
    <reaction evidence="1">
        <text>pyridoxamine 5'-phosphate + O2 + H2O = pyridoxal 5'-phosphate + H2O2 + NH4(+)</text>
        <dbReference type="Rhea" id="RHEA:15817"/>
        <dbReference type="ChEBI" id="CHEBI:15377"/>
        <dbReference type="ChEBI" id="CHEBI:15379"/>
        <dbReference type="ChEBI" id="CHEBI:16240"/>
        <dbReference type="ChEBI" id="CHEBI:28938"/>
        <dbReference type="ChEBI" id="CHEBI:58451"/>
        <dbReference type="ChEBI" id="CHEBI:597326"/>
        <dbReference type="EC" id="1.4.3.5"/>
    </reaction>
</comment>
<comment type="catalytic activity">
    <reaction evidence="1">
        <text>pyridoxine 5'-phosphate + O2 = pyridoxal 5'-phosphate + H2O2</text>
        <dbReference type="Rhea" id="RHEA:15149"/>
        <dbReference type="ChEBI" id="CHEBI:15379"/>
        <dbReference type="ChEBI" id="CHEBI:16240"/>
        <dbReference type="ChEBI" id="CHEBI:58589"/>
        <dbReference type="ChEBI" id="CHEBI:597326"/>
        <dbReference type="EC" id="1.4.3.5"/>
    </reaction>
</comment>
<comment type="cofactor">
    <cofactor evidence="1">
        <name>FMN</name>
        <dbReference type="ChEBI" id="CHEBI:58210"/>
    </cofactor>
    <text evidence="1">Binds 1 FMN per subunit.</text>
</comment>
<comment type="pathway">
    <text evidence="1">Cofactor metabolism; pyridoxal 5'-phosphate salvage; pyridoxal 5'-phosphate from pyridoxamine 5'-phosphate: step 1/1.</text>
</comment>
<comment type="pathway">
    <text evidence="1">Cofactor metabolism; pyridoxal 5'-phosphate salvage; pyridoxal 5'-phosphate from pyridoxine 5'-phosphate: step 1/1.</text>
</comment>
<comment type="subunit">
    <text evidence="1">Homodimer.</text>
</comment>
<comment type="similarity">
    <text evidence="1">Belongs to the pyridoxamine 5'-phosphate oxidase family.</text>
</comment>
<organism>
    <name type="scientific">Alteromonas mediterranea (strain DSM 17117 / CIP 110805 / LMG 28347 / Deep ecotype)</name>
    <dbReference type="NCBI Taxonomy" id="1774373"/>
    <lineage>
        <taxon>Bacteria</taxon>
        <taxon>Pseudomonadati</taxon>
        <taxon>Pseudomonadota</taxon>
        <taxon>Gammaproteobacteria</taxon>
        <taxon>Alteromonadales</taxon>
        <taxon>Alteromonadaceae</taxon>
        <taxon>Alteromonas/Salinimonas group</taxon>
        <taxon>Alteromonas</taxon>
    </lineage>
</organism>
<sequence>MAISDMRRQYSKGSLSESDITSSPFSLFDQWLKDAIDAGIPDPTAMTVATVDSTGQPSQRIVLLKDVSDKGFVFFTNLGSRKAQELSVNPKVSCHFPWFFMERQVRVCGSVEKLSVSENAAYFFSRPKDSQLAAYASKQSKPIGSRALLLTQFKQLKDKFANKALPVPDFWGGFRIVPHQIEFWQGGEDRLHDRLEYNKAEDGRWSTQRLMP</sequence>
<protein>
    <recommendedName>
        <fullName evidence="1">Pyridoxine/pyridoxamine 5'-phosphate oxidase</fullName>
        <ecNumber evidence="1">1.4.3.5</ecNumber>
    </recommendedName>
    <alternativeName>
        <fullName evidence="1">PNP/PMP oxidase</fullName>
        <shortName evidence="1">PNPOx</shortName>
    </alternativeName>
    <alternativeName>
        <fullName evidence="1">Pyridoxal 5'-phosphate synthase</fullName>
    </alternativeName>
</protein>
<keyword id="KW-0285">Flavoprotein</keyword>
<keyword id="KW-0288">FMN</keyword>
<keyword id="KW-0560">Oxidoreductase</keyword>
<keyword id="KW-0664">Pyridoxine biosynthesis</keyword>
<feature type="chain" id="PRO_1000186288" description="Pyridoxine/pyridoxamine 5'-phosphate oxidase">
    <location>
        <begin position="1"/>
        <end position="212"/>
    </location>
</feature>
<feature type="binding site" evidence="1">
    <location>
        <begin position="7"/>
        <end position="10"/>
    </location>
    <ligand>
        <name>substrate</name>
    </ligand>
</feature>
<feature type="binding site" evidence="1">
    <location>
        <begin position="60"/>
        <end position="65"/>
    </location>
    <ligand>
        <name>FMN</name>
        <dbReference type="ChEBI" id="CHEBI:58210"/>
    </ligand>
</feature>
<feature type="binding site" evidence="1">
    <location>
        <position position="65"/>
    </location>
    <ligand>
        <name>substrate</name>
    </ligand>
</feature>
<feature type="binding site" evidence="1">
    <location>
        <begin position="75"/>
        <end position="76"/>
    </location>
    <ligand>
        <name>FMN</name>
        <dbReference type="ChEBI" id="CHEBI:58210"/>
    </ligand>
</feature>
<feature type="binding site" evidence="1">
    <location>
        <position position="81"/>
    </location>
    <ligand>
        <name>FMN</name>
        <dbReference type="ChEBI" id="CHEBI:58210"/>
    </ligand>
</feature>
<feature type="binding site" evidence="1">
    <location>
        <position position="82"/>
    </location>
    <ligand>
        <name>FMN</name>
        <dbReference type="ChEBI" id="CHEBI:58210"/>
    </ligand>
</feature>
<feature type="binding site" evidence="1">
    <location>
        <position position="104"/>
    </location>
    <ligand>
        <name>FMN</name>
        <dbReference type="ChEBI" id="CHEBI:58210"/>
    </ligand>
</feature>
<feature type="binding site" evidence="1">
    <location>
        <position position="122"/>
    </location>
    <ligand>
        <name>substrate</name>
    </ligand>
</feature>
<feature type="binding site" evidence="1">
    <location>
        <position position="126"/>
    </location>
    <ligand>
        <name>substrate</name>
    </ligand>
</feature>
<feature type="binding site" evidence="1">
    <location>
        <position position="130"/>
    </location>
    <ligand>
        <name>substrate</name>
    </ligand>
</feature>
<feature type="binding site" evidence="1">
    <location>
        <begin position="139"/>
        <end position="140"/>
    </location>
    <ligand>
        <name>FMN</name>
        <dbReference type="ChEBI" id="CHEBI:58210"/>
    </ligand>
</feature>
<feature type="binding site" evidence="1">
    <location>
        <position position="184"/>
    </location>
    <ligand>
        <name>FMN</name>
        <dbReference type="ChEBI" id="CHEBI:58210"/>
    </ligand>
</feature>
<feature type="binding site" evidence="1">
    <location>
        <begin position="190"/>
        <end position="192"/>
    </location>
    <ligand>
        <name>substrate</name>
    </ligand>
</feature>
<feature type="binding site" evidence="1">
    <location>
        <position position="194"/>
    </location>
    <ligand>
        <name>FMN</name>
        <dbReference type="ChEBI" id="CHEBI:58210"/>
    </ligand>
</feature>